<name>HRCA_AGRFC</name>
<protein>
    <recommendedName>
        <fullName evidence="1">Heat-inducible transcription repressor HrcA</fullName>
    </recommendedName>
</protein>
<sequence>MGFSAPLSKDQASLLDERSREIFRRIVEGYLDTGEPLGSRSLSRLLPMSLSPASVRNVMSDLEELGLIYSPHISAGRLPTQTGLRFFVDAFMQVGDLPADERANIDRQIGPVAGHEQSLEGLLTEASRMLSGMSRGAGLVLTAKNDVILKHVEFIRLEPTKALAVLVGDHNQVENRIIELPAGISSSQLTEAANFINAHLSGQTLQELRGQFQTQRTELQSELGMLAQDLVERGLAIWAGDNEEGKLGRLIVRGRSNLLEGLAGEEDIDRVRMLFDDLERKENLIEILNLAESGSGVRIFIGSENKLFSLSGSSLIVAPYRDEENRVVGAVGVIGPTRLNYARIVPMVDYTAQIMARLSRKQR</sequence>
<reference key="1">
    <citation type="journal article" date="2001" name="Science">
        <title>The genome of the natural genetic engineer Agrobacterium tumefaciens C58.</title>
        <authorList>
            <person name="Wood D.W."/>
            <person name="Setubal J.C."/>
            <person name="Kaul R."/>
            <person name="Monks D.E."/>
            <person name="Kitajima J.P."/>
            <person name="Okura V.K."/>
            <person name="Zhou Y."/>
            <person name="Chen L."/>
            <person name="Wood G.E."/>
            <person name="Almeida N.F. Jr."/>
            <person name="Woo L."/>
            <person name="Chen Y."/>
            <person name="Paulsen I.T."/>
            <person name="Eisen J.A."/>
            <person name="Karp P.D."/>
            <person name="Bovee D. Sr."/>
            <person name="Chapman P."/>
            <person name="Clendenning J."/>
            <person name="Deatherage G."/>
            <person name="Gillet W."/>
            <person name="Grant C."/>
            <person name="Kutyavin T."/>
            <person name="Levy R."/>
            <person name="Li M.-J."/>
            <person name="McClelland E."/>
            <person name="Palmieri A."/>
            <person name="Raymond C."/>
            <person name="Rouse G."/>
            <person name="Saenphimmachak C."/>
            <person name="Wu Z."/>
            <person name="Romero P."/>
            <person name="Gordon D."/>
            <person name="Zhang S."/>
            <person name="Yoo H."/>
            <person name="Tao Y."/>
            <person name="Biddle P."/>
            <person name="Jung M."/>
            <person name="Krespan W."/>
            <person name="Perry M."/>
            <person name="Gordon-Kamm B."/>
            <person name="Liao L."/>
            <person name="Kim S."/>
            <person name="Hendrick C."/>
            <person name="Zhao Z.-Y."/>
            <person name="Dolan M."/>
            <person name="Chumley F."/>
            <person name="Tingey S.V."/>
            <person name="Tomb J.-F."/>
            <person name="Gordon M.P."/>
            <person name="Olson M.V."/>
            <person name="Nester E.W."/>
        </authorList>
    </citation>
    <scope>NUCLEOTIDE SEQUENCE [LARGE SCALE GENOMIC DNA]</scope>
    <source>
        <strain>C58 / ATCC 33970</strain>
    </source>
</reference>
<reference key="2">
    <citation type="journal article" date="2001" name="Science">
        <title>Genome sequence of the plant pathogen and biotechnology agent Agrobacterium tumefaciens C58.</title>
        <authorList>
            <person name="Goodner B."/>
            <person name="Hinkle G."/>
            <person name="Gattung S."/>
            <person name="Miller N."/>
            <person name="Blanchard M."/>
            <person name="Qurollo B."/>
            <person name="Goldman B.S."/>
            <person name="Cao Y."/>
            <person name="Askenazi M."/>
            <person name="Halling C."/>
            <person name="Mullin L."/>
            <person name="Houmiel K."/>
            <person name="Gordon J."/>
            <person name="Vaudin M."/>
            <person name="Iartchouk O."/>
            <person name="Epp A."/>
            <person name="Liu F."/>
            <person name="Wollam C."/>
            <person name="Allinger M."/>
            <person name="Doughty D."/>
            <person name="Scott C."/>
            <person name="Lappas C."/>
            <person name="Markelz B."/>
            <person name="Flanagan C."/>
            <person name="Crowell C."/>
            <person name="Gurson J."/>
            <person name="Lomo C."/>
            <person name="Sear C."/>
            <person name="Strub G."/>
            <person name="Cielo C."/>
            <person name="Slater S."/>
        </authorList>
    </citation>
    <scope>NUCLEOTIDE SEQUENCE [LARGE SCALE GENOMIC DNA]</scope>
    <source>
        <strain>C58 / ATCC 33970</strain>
    </source>
</reference>
<evidence type="ECO:0000255" key="1">
    <source>
        <dbReference type="HAMAP-Rule" id="MF_00081"/>
    </source>
</evidence>
<proteinExistence type="inferred from homology"/>
<dbReference type="EMBL" id="AE007869">
    <property type="protein sequence ID" value="AAK86145.1"/>
    <property type="molecule type" value="Genomic_DNA"/>
</dbReference>
<dbReference type="PIR" id="AH2616">
    <property type="entry name" value="AH2616"/>
</dbReference>
<dbReference type="PIR" id="H97398">
    <property type="entry name" value="H97398"/>
</dbReference>
<dbReference type="RefSeq" id="NP_353360.1">
    <property type="nucleotide sequence ID" value="NC_003062.2"/>
</dbReference>
<dbReference type="RefSeq" id="WP_006310175.1">
    <property type="nucleotide sequence ID" value="NC_003062.2"/>
</dbReference>
<dbReference type="SMR" id="P0A3I8"/>
<dbReference type="STRING" id="176299.Atu0328"/>
<dbReference type="EnsemblBacteria" id="AAK86145">
    <property type="protein sequence ID" value="AAK86145"/>
    <property type="gene ID" value="Atu0328"/>
</dbReference>
<dbReference type="GeneID" id="1132366"/>
<dbReference type="KEGG" id="atu:Atu0328"/>
<dbReference type="PATRIC" id="fig|176299.10.peg.320"/>
<dbReference type="eggNOG" id="COG1420">
    <property type="taxonomic scope" value="Bacteria"/>
</dbReference>
<dbReference type="HOGENOM" id="CLU_050019_0_0_5"/>
<dbReference type="OrthoDB" id="9783139at2"/>
<dbReference type="PhylomeDB" id="P0A3I8"/>
<dbReference type="BioCyc" id="AGRO:ATU0328-MONOMER"/>
<dbReference type="Proteomes" id="UP000000813">
    <property type="component" value="Chromosome circular"/>
</dbReference>
<dbReference type="GO" id="GO:0003677">
    <property type="term" value="F:DNA binding"/>
    <property type="evidence" value="ECO:0007669"/>
    <property type="project" value="InterPro"/>
</dbReference>
<dbReference type="GO" id="GO:0045892">
    <property type="term" value="P:negative regulation of DNA-templated transcription"/>
    <property type="evidence" value="ECO:0007669"/>
    <property type="project" value="UniProtKB-UniRule"/>
</dbReference>
<dbReference type="Gene3D" id="3.30.450.40">
    <property type="match status" value="1"/>
</dbReference>
<dbReference type="Gene3D" id="3.30.390.60">
    <property type="entry name" value="Heat-inducible transcription repressor hrca homolog, domain 3"/>
    <property type="match status" value="1"/>
</dbReference>
<dbReference type="Gene3D" id="1.10.10.10">
    <property type="entry name" value="Winged helix-like DNA-binding domain superfamily/Winged helix DNA-binding domain"/>
    <property type="match status" value="1"/>
</dbReference>
<dbReference type="HAMAP" id="MF_00081">
    <property type="entry name" value="HrcA"/>
    <property type="match status" value="1"/>
</dbReference>
<dbReference type="InterPro" id="IPR029016">
    <property type="entry name" value="GAF-like_dom_sf"/>
</dbReference>
<dbReference type="InterPro" id="IPR002571">
    <property type="entry name" value="HrcA"/>
</dbReference>
<dbReference type="InterPro" id="IPR021153">
    <property type="entry name" value="HrcA_C"/>
</dbReference>
<dbReference type="InterPro" id="IPR036388">
    <property type="entry name" value="WH-like_DNA-bd_sf"/>
</dbReference>
<dbReference type="InterPro" id="IPR036390">
    <property type="entry name" value="WH_DNA-bd_sf"/>
</dbReference>
<dbReference type="InterPro" id="IPR023120">
    <property type="entry name" value="WHTH_transcript_rep_HrcA_IDD"/>
</dbReference>
<dbReference type="NCBIfam" id="TIGR00331">
    <property type="entry name" value="hrcA"/>
    <property type="match status" value="1"/>
</dbReference>
<dbReference type="PANTHER" id="PTHR34824">
    <property type="entry name" value="HEAT-INDUCIBLE TRANSCRIPTION REPRESSOR HRCA"/>
    <property type="match status" value="1"/>
</dbReference>
<dbReference type="PANTHER" id="PTHR34824:SF1">
    <property type="entry name" value="HEAT-INDUCIBLE TRANSCRIPTION REPRESSOR HRCA"/>
    <property type="match status" value="1"/>
</dbReference>
<dbReference type="Pfam" id="PF01628">
    <property type="entry name" value="HrcA"/>
    <property type="match status" value="1"/>
</dbReference>
<dbReference type="PIRSF" id="PIRSF005485">
    <property type="entry name" value="HrcA"/>
    <property type="match status" value="1"/>
</dbReference>
<dbReference type="SUPFAM" id="SSF55781">
    <property type="entry name" value="GAF domain-like"/>
    <property type="match status" value="1"/>
</dbReference>
<dbReference type="SUPFAM" id="SSF46785">
    <property type="entry name" value="Winged helix' DNA-binding domain"/>
    <property type="match status" value="1"/>
</dbReference>
<comment type="function">
    <text evidence="1">Negative regulator of class I heat shock genes (grpE-dnaK-dnaJ and groELS operons). Prevents heat-shock induction of these operons.</text>
</comment>
<comment type="similarity">
    <text evidence="1">Belongs to the HrcA family.</text>
</comment>
<keyword id="KW-1185">Reference proteome</keyword>
<keyword id="KW-0678">Repressor</keyword>
<keyword id="KW-0346">Stress response</keyword>
<keyword id="KW-0804">Transcription</keyword>
<keyword id="KW-0805">Transcription regulation</keyword>
<gene>
    <name evidence="1" type="primary">hrcA</name>
    <name type="ordered locus">Atu0328</name>
    <name type="ORF">AGR_C_572</name>
</gene>
<accession>P0A3I8</accession>
<accession>O68443</accession>
<feature type="chain" id="PRO_0000182437" description="Heat-inducible transcription repressor HrcA">
    <location>
        <begin position="1"/>
        <end position="363"/>
    </location>
</feature>
<organism>
    <name type="scientific">Agrobacterium fabrum (strain C58 / ATCC 33970)</name>
    <name type="common">Agrobacterium tumefaciens (strain C58)</name>
    <dbReference type="NCBI Taxonomy" id="176299"/>
    <lineage>
        <taxon>Bacteria</taxon>
        <taxon>Pseudomonadati</taxon>
        <taxon>Pseudomonadota</taxon>
        <taxon>Alphaproteobacteria</taxon>
        <taxon>Hyphomicrobiales</taxon>
        <taxon>Rhizobiaceae</taxon>
        <taxon>Rhizobium/Agrobacterium group</taxon>
        <taxon>Agrobacterium</taxon>
        <taxon>Agrobacterium tumefaciens complex</taxon>
    </lineage>
</organism>